<keyword id="KW-0106">Calcium</keyword>
<keyword id="KW-0903">Direct protein sequencing</keyword>
<keyword id="KW-1206">Fibrinogenolytic toxin</keyword>
<keyword id="KW-0325">Glycoprotein</keyword>
<keyword id="KW-1199">Hemostasis impairing toxin</keyword>
<keyword id="KW-0378">Hydrolase</keyword>
<keyword id="KW-0479">Metal-binding</keyword>
<keyword id="KW-0482">Metalloprotease</keyword>
<keyword id="KW-0645">Protease</keyword>
<keyword id="KW-0964">Secreted</keyword>
<keyword id="KW-0800">Toxin</keyword>
<keyword id="KW-0862">Zinc</keyword>
<protein>
    <recommendedName>
        <fullName>Zinc metalloproteinase atrahagin</fullName>
        <ecNumber>3.4.24.-</ecNumber>
    </recommendedName>
    <alternativeName>
        <fullName>Snake venom metalloproteinase</fullName>
        <shortName>SVMP</shortName>
    </alternativeName>
</protein>
<dbReference type="EC" id="3.4.24.-"/>
<dbReference type="GO" id="GO:0005576">
    <property type="term" value="C:extracellular region"/>
    <property type="evidence" value="ECO:0007669"/>
    <property type="project" value="UniProtKB-SubCell"/>
</dbReference>
<dbReference type="GO" id="GO:0046872">
    <property type="term" value="F:metal ion binding"/>
    <property type="evidence" value="ECO:0007669"/>
    <property type="project" value="UniProtKB-KW"/>
</dbReference>
<dbReference type="GO" id="GO:0008237">
    <property type="term" value="F:metallopeptidase activity"/>
    <property type="evidence" value="ECO:0007669"/>
    <property type="project" value="UniProtKB-KW"/>
</dbReference>
<dbReference type="GO" id="GO:0090729">
    <property type="term" value="F:toxin activity"/>
    <property type="evidence" value="ECO:0007669"/>
    <property type="project" value="UniProtKB-KW"/>
</dbReference>
<dbReference type="GO" id="GO:0006508">
    <property type="term" value="P:proteolysis"/>
    <property type="evidence" value="ECO:0007669"/>
    <property type="project" value="UniProtKB-KW"/>
</dbReference>
<comment type="function">
    <text evidence="2">Snake venom zinc metalloprotease that causes mast cell degranulation and histamine release. Selectively degrades the alpha-chain of human fibrinogen (FGA).</text>
</comment>
<comment type="cofactor">
    <cofactor evidence="1">
        <name>Zn(2+)</name>
        <dbReference type="ChEBI" id="CHEBI:29105"/>
    </cofactor>
    <text evidence="1">Binds 1 zinc ion per subunit.</text>
</comment>
<comment type="activity regulation">
    <text evidence="2">Inhibited by EDTA and EGTA, but not by PMSF and leupeptin.</text>
</comment>
<comment type="subunit">
    <text evidence="2">Monomer.</text>
</comment>
<comment type="subcellular location">
    <subcellularLocation>
        <location>Secreted</location>
    </subcellularLocation>
</comment>
<comment type="tissue specificity">
    <text>Expressed by the venom gland.</text>
</comment>
<comment type="PTM">
    <text evidence="1">Glycosylated.</text>
</comment>
<comment type="miscellaneous">
    <text evidence="4">Negative results: does not degrade the beta- and the gamma-chain of fibrinogen. Does not induce skin hemorrhage when subcutaneously injected into mice (5 or 50 ug) (PubMed:16310401).</text>
</comment>
<comment type="similarity">
    <text evidence="3">Belongs to the venom metalloproteinase (M12B) family. P-III subfamily. P-IIIa sub-subfamily.</text>
</comment>
<proteinExistence type="evidence at protein level"/>
<reference key="1">
    <citation type="journal article" date="2006" name="Int. J. Biochem. Cell Biol.">
        <title>Potent histamine-releasing activity of atrahagin, a novel snake venom metalloproteinase.</title>
        <authorList>
            <person name="Wei J.-F."/>
            <person name="Mo Y.-Z."/>
            <person name="Qiao L.-Y."/>
            <person name="Wei X.-L."/>
            <person name="Chen H.-Q."/>
            <person name="Xie H."/>
            <person name="Fu Y.-L."/>
            <person name="Wang W.-Y."/>
            <person name="Xiong Y.-L."/>
            <person name="He S.-H."/>
        </authorList>
    </citation>
    <scope>PROTEIN SEQUENCE</scope>
    <scope>FUNCTION</scope>
    <scope>ACTIVITY REGULATION</scope>
    <scope>SUBUNIT</scope>
    <source>
        <tissue>Venom</tissue>
    </source>
</reference>
<organism>
    <name type="scientific">Naja atra</name>
    <name type="common">Chinese cobra</name>
    <dbReference type="NCBI Taxonomy" id="8656"/>
    <lineage>
        <taxon>Eukaryota</taxon>
        <taxon>Metazoa</taxon>
        <taxon>Chordata</taxon>
        <taxon>Craniata</taxon>
        <taxon>Vertebrata</taxon>
        <taxon>Euteleostomi</taxon>
        <taxon>Lepidosauria</taxon>
        <taxon>Squamata</taxon>
        <taxon>Bifurcata</taxon>
        <taxon>Unidentata</taxon>
        <taxon>Episquamata</taxon>
        <taxon>Toxicofera</taxon>
        <taxon>Serpentes</taxon>
        <taxon>Colubroidea</taxon>
        <taxon>Elapidae</taxon>
        <taxon>Elapinae</taxon>
        <taxon>Naja</taxon>
    </lineage>
</organism>
<sequence>TNTPEDDRYLQDYVYI</sequence>
<feature type="chain" id="PRO_0000418046" description="Zinc metalloproteinase atrahagin">
    <location>
        <begin position="1"/>
        <end position="16" status="greater than"/>
    </location>
</feature>
<feature type="domain" description="Peptidase M12B">
    <location>
        <begin position="14"/>
        <end position="16" status="greater than"/>
    </location>
</feature>
<feature type="non-terminal residue">
    <location>
        <position position="16"/>
    </location>
</feature>
<evidence type="ECO:0000250" key="1"/>
<evidence type="ECO:0000269" key="2">
    <source>
    </source>
</evidence>
<evidence type="ECO:0000305" key="3"/>
<evidence type="ECO:0000305" key="4">
    <source>
    </source>
</evidence>
<accession>P0DJJ1</accession>
<name>VM3AH_NAJAT</name>